<comment type="subunit">
    <text evidence="1">Part of the 50S ribosomal subunit.</text>
</comment>
<comment type="subcellular location">
    <subcellularLocation>
        <location>Plastid</location>
        <location>Chloroplast</location>
    </subcellularLocation>
</comment>
<comment type="similarity">
    <text evidence="4">Belongs to the universal ribosomal protein uL2 family.</text>
</comment>
<keyword id="KW-0150">Chloroplast</keyword>
<keyword id="KW-0934">Plastid</keyword>
<keyword id="KW-0687">Ribonucleoprotein</keyword>
<keyword id="KW-0689">Ribosomal protein</keyword>
<dbReference type="EMBL" id="AY228468">
    <property type="protein sequence ID" value="AAO74144.1"/>
    <property type="molecule type" value="Genomic_DNA"/>
</dbReference>
<dbReference type="RefSeq" id="NP_817235.1">
    <property type="nucleotide sequence ID" value="NC_004677.2"/>
</dbReference>
<dbReference type="SMR" id="Q85WS5"/>
<dbReference type="GeneID" id="806972"/>
<dbReference type="GO" id="GO:0009507">
    <property type="term" value="C:chloroplast"/>
    <property type="evidence" value="ECO:0007669"/>
    <property type="project" value="UniProtKB-SubCell"/>
</dbReference>
<dbReference type="GO" id="GO:0005762">
    <property type="term" value="C:mitochondrial large ribosomal subunit"/>
    <property type="evidence" value="ECO:0007669"/>
    <property type="project" value="TreeGrafter"/>
</dbReference>
<dbReference type="GO" id="GO:0019843">
    <property type="term" value="F:rRNA binding"/>
    <property type="evidence" value="ECO:0007669"/>
    <property type="project" value="UniProtKB-UniRule"/>
</dbReference>
<dbReference type="GO" id="GO:0003735">
    <property type="term" value="F:structural constituent of ribosome"/>
    <property type="evidence" value="ECO:0007669"/>
    <property type="project" value="InterPro"/>
</dbReference>
<dbReference type="GO" id="GO:0016740">
    <property type="term" value="F:transferase activity"/>
    <property type="evidence" value="ECO:0007669"/>
    <property type="project" value="InterPro"/>
</dbReference>
<dbReference type="GO" id="GO:0032543">
    <property type="term" value="P:mitochondrial translation"/>
    <property type="evidence" value="ECO:0007669"/>
    <property type="project" value="TreeGrafter"/>
</dbReference>
<dbReference type="FunFam" id="4.10.950.10:FF:000001">
    <property type="entry name" value="50S ribosomal protein L2"/>
    <property type="match status" value="1"/>
</dbReference>
<dbReference type="FunFam" id="2.30.30.30:FF:000008">
    <property type="entry name" value="50S ribosomal protein L2, chloroplastic"/>
    <property type="match status" value="1"/>
</dbReference>
<dbReference type="FunFam" id="2.40.50.140:FF:000029">
    <property type="entry name" value="50S ribosomal protein L2, chloroplastic"/>
    <property type="match status" value="1"/>
</dbReference>
<dbReference type="Gene3D" id="2.30.30.30">
    <property type="match status" value="1"/>
</dbReference>
<dbReference type="Gene3D" id="2.40.50.140">
    <property type="entry name" value="Nucleic acid-binding proteins"/>
    <property type="match status" value="1"/>
</dbReference>
<dbReference type="Gene3D" id="4.10.950.10">
    <property type="entry name" value="Ribosomal protein L2, domain 3"/>
    <property type="match status" value="1"/>
</dbReference>
<dbReference type="HAMAP" id="MF_01320_B">
    <property type="entry name" value="Ribosomal_uL2_B"/>
    <property type="match status" value="1"/>
</dbReference>
<dbReference type="InterPro" id="IPR012340">
    <property type="entry name" value="NA-bd_OB-fold"/>
</dbReference>
<dbReference type="InterPro" id="IPR014722">
    <property type="entry name" value="Rib_uL2_dom2"/>
</dbReference>
<dbReference type="InterPro" id="IPR002171">
    <property type="entry name" value="Ribosomal_uL2"/>
</dbReference>
<dbReference type="InterPro" id="IPR005880">
    <property type="entry name" value="Ribosomal_uL2_bac/org-type"/>
</dbReference>
<dbReference type="InterPro" id="IPR022669">
    <property type="entry name" value="Ribosomal_uL2_C"/>
</dbReference>
<dbReference type="InterPro" id="IPR014726">
    <property type="entry name" value="Ribosomal_uL2_dom3"/>
</dbReference>
<dbReference type="InterPro" id="IPR022666">
    <property type="entry name" value="Ribosomal_uL2_RNA-bd_dom"/>
</dbReference>
<dbReference type="InterPro" id="IPR008991">
    <property type="entry name" value="Translation_prot_SH3-like_sf"/>
</dbReference>
<dbReference type="NCBIfam" id="TIGR01171">
    <property type="entry name" value="rplB_bact"/>
    <property type="match status" value="1"/>
</dbReference>
<dbReference type="PANTHER" id="PTHR13691:SF5">
    <property type="entry name" value="LARGE RIBOSOMAL SUBUNIT PROTEIN UL2M"/>
    <property type="match status" value="1"/>
</dbReference>
<dbReference type="PANTHER" id="PTHR13691">
    <property type="entry name" value="RIBOSOMAL PROTEIN L2"/>
    <property type="match status" value="1"/>
</dbReference>
<dbReference type="Pfam" id="PF00181">
    <property type="entry name" value="Ribosomal_L2"/>
    <property type="match status" value="1"/>
</dbReference>
<dbReference type="Pfam" id="PF03947">
    <property type="entry name" value="Ribosomal_L2_C"/>
    <property type="match status" value="1"/>
</dbReference>
<dbReference type="PIRSF" id="PIRSF002158">
    <property type="entry name" value="Ribosomal_L2"/>
    <property type="match status" value="1"/>
</dbReference>
<dbReference type="SMART" id="SM01383">
    <property type="entry name" value="Ribosomal_L2"/>
    <property type="match status" value="1"/>
</dbReference>
<dbReference type="SMART" id="SM01382">
    <property type="entry name" value="Ribosomal_L2_C"/>
    <property type="match status" value="1"/>
</dbReference>
<dbReference type="SUPFAM" id="SSF50249">
    <property type="entry name" value="Nucleic acid-binding proteins"/>
    <property type="match status" value="1"/>
</dbReference>
<dbReference type="SUPFAM" id="SSF50104">
    <property type="entry name" value="Translation proteins SH3-like domain"/>
    <property type="match status" value="1"/>
</dbReference>
<gene>
    <name type="primary">rpl2</name>
</gene>
<protein>
    <recommendedName>
        <fullName evidence="2">Large ribosomal subunit protein uL2c</fullName>
    </recommendedName>
    <alternativeName>
        <fullName evidence="4">50S ribosomal protein L2, chloroplastic</fullName>
    </alternativeName>
</protein>
<feature type="chain" id="PRO_0000129696" description="Large ribosomal subunit protein uL2c">
    <location>
        <begin position="1"/>
        <end position="276"/>
    </location>
</feature>
<feature type="region of interest" description="Disordered" evidence="3">
    <location>
        <begin position="225"/>
        <end position="276"/>
    </location>
</feature>
<sequence>MAIRSYRILTPDTHNRSVSGFDGRVQLDPQKKLTSGQHHCGKGRNARGIITARHRGGGHKRLYRQIDFRRDKEHISGEIVTIEYDPNRSAYICKVHYKNGDKMYILHPRGVMIGDTILSGPKAPISIGNVLPLTNMPLGTAIHNIEITLGKGGQLARAAGAVAELIAKEDRSATLRLPSGEVRLISENCSATIGQVGNITANNRSFGKAGAKRWLGKRSEVRGVAMNPVDHPHGGGEGRTPIGRKKPVTPWGYSALGKKSRKRNRYSDASILRRRE</sequence>
<proteinExistence type="inferred from homology"/>
<organism>
    <name type="scientific">Pinus koraiensis</name>
    <name type="common">Korean pine</name>
    <dbReference type="NCBI Taxonomy" id="88728"/>
    <lineage>
        <taxon>Eukaryota</taxon>
        <taxon>Viridiplantae</taxon>
        <taxon>Streptophyta</taxon>
        <taxon>Embryophyta</taxon>
        <taxon>Tracheophyta</taxon>
        <taxon>Spermatophyta</taxon>
        <taxon>Pinopsida</taxon>
        <taxon>Pinidae</taxon>
        <taxon>Conifers I</taxon>
        <taxon>Pinales</taxon>
        <taxon>Pinaceae</taxon>
        <taxon>Pinus</taxon>
        <taxon>Pinus subgen. Strobus</taxon>
    </lineage>
</organism>
<reference key="1">
    <citation type="submission" date="2003-02" db="EMBL/GenBank/DDBJ databases">
        <title>Complete nucleotide sequence of Pinus koraiensis.</title>
        <authorList>
            <person name="Noh E.W."/>
            <person name="Lee J.S."/>
            <person name="Choi Y.I."/>
            <person name="Han M.S."/>
            <person name="Yi Y.S."/>
            <person name="Han S.U."/>
        </authorList>
    </citation>
    <scope>NUCLEOTIDE SEQUENCE [LARGE SCALE GENOMIC DNA]</scope>
    <source>
        <strain>KangWon16</strain>
    </source>
</reference>
<name>RK2_PINKO</name>
<accession>Q85WS5</accession>
<evidence type="ECO:0000250" key="1"/>
<evidence type="ECO:0000255" key="2">
    <source>
        <dbReference type="HAMAP-Rule" id="MF_01320"/>
    </source>
</evidence>
<evidence type="ECO:0000256" key="3">
    <source>
        <dbReference type="SAM" id="MobiDB-lite"/>
    </source>
</evidence>
<evidence type="ECO:0000305" key="4"/>
<geneLocation type="chloroplast"/>